<accession>Q2GG58</accession>
<evidence type="ECO:0000255" key="1">
    <source>
        <dbReference type="HAMAP-Rule" id="MF_00141"/>
    </source>
</evidence>
<sequence>MAERGSDIRPGHVLEHNNALYLVVKVMHTQPGKGGAYIQAEMKNLKTGAKQYERFRADGDIKRAIVDESDYQYIYGDGSMITIMHLKTYEQLTISKDILGDKSIYLQDNIIITLVFYNGEIISAKVPDYVTLQVVETEAVIKGQTVSSSAYKVAMLENNQRISVPTFIKPGDRIVVYTPDDSYYERAKG</sequence>
<organism>
    <name type="scientific">Ehrlichia chaffeensis (strain ATCC CRL-10679 / Arkansas)</name>
    <dbReference type="NCBI Taxonomy" id="205920"/>
    <lineage>
        <taxon>Bacteria</taxon>
        <taxon>Pseudomonadati</taxon>
        <taxon>Pseudomonadota</taxon>
        <taxon>Alphaproteobacteria</taxon>
        <taxon>Rickettsiales</taxon>
        <taxon>Anaplasmataceae</taxon>
        <taxon>Ehrlichia</taxon>
    </lineage>
</organism>
<protein>
    <recommendedName>
        <fullName evidence="1">Elongation factor P</fullName>
        <shortName evidence="1">EF-P</shortName>
    </recommendedName>
</protein>
<keyword id="KW-0963">Cytoplasm</keyword>
<keyword id="KW-0251">Elongation factor</keyword>
<keyword id="KW-0648">Protein biosynthesis</keyword>
<keyword id="KW-1185">Reference proteome</keyword>
<gene>
    <name evidence="1" type="primary">efp</name>
    <name type="ordered locus">ECH_0777</name>
</gene>
<dbReference type="EMBL" id="CP000236">
    <property type="protein sequence ID" value="ABD44488.1"/>
    <property type="molecule type" value="Genomic_DNA"/>
</dbReference>
<dbReference type="RefSeq" id="WP_006011629.1">
    <property type="nucleotide sequence ID" value="NC_007799.1"/>
</dbReference>
<dbReference type="SMR" id="Q2GG58"/>
<dbReference type="STRING" id="205920.ECH_0777"/>
<dbReference type="KEGG" id="ech:ECH_0777"/>
<dbReference type="eggNOG" id="COG0231">
    <property type="taxonomic scope" value="Bacteria"/>
</dbReference>
<dbReference type="HOGENOM" id="CLU_074944_1_1_5"/>
<dbReference type="OrthoDB" id="9801844at2"/>
<dbReference type="UniPathway" id="UPA00345"/>
<dbReference type="Proteomes" id="UP000008320">
    <property type="component" value="Chromosome"/>
</dbReference>
<dbReference type="GO" id="GO:0005737">
    <property type="term" value="C:cytoplasm"/>
    <property type="evidence" value="ECO:0007669"/>
    <property type="project" value="UniProtKB-SubCell"/>
</dbReference>
<dbReference type="GO" id="GO:0003746">
    <property type="term" value="F:translation elongation factor activity"/>
    <property type="evidence" value="ECO:0007669"/>
    <property type="project" value="UniProtKB-UniRule"/>
</dbReference>
<dbReference type="GO" id="GO:0043043">
    <property type="term" value="P:peptide biosynthetic process"/>
    <property type="evidence" value="ECO:0007669"/>
    <property type="project" value="InterPro"/>
</dbReference>
<dbReference type="FunFam" id="2.40.50.140:FF:000004">
    <property type="entry name" value="Elongation factor P"/>
    <property type="match status" value="1"/>
</dbReference>
<dbReference type="FunFam" id="2.40.50.140:FF:000009">
    <property type="entry name" value="Elongation factor P"/>
    <property type="match status" value="1"/>
</dbReference>
<dbReference type="Gene3D" id="2.30.30.30">
    <property type="match status" value="1"/>
</dbReference>
<dbReference type="Gene3D" id="2.40.50.140">
    <property type="entry name" value="Nucleic acid-binding proteins"/>
    <property type="match status" value="2"/>
</dbReference>
<dbReference type="HAMAP" id="MF_00141">
    <property type="entry name" value="EF_P"/>
    <property type="match status" value="1"/>
</dbReference>
<dbReference type="InterPro" id="IPR015365">
    <property type="entry name" value="Elong-fact-P_C"/>
</dbReference>
<dbReference type="InterPro" id="IPR012340">
    <property type="entry name" value="NA-bd_OB-fold"/>
</dbReference>
<dbReference type="InterPro" id="IPR014722">
    <property type="entry name" value="Rib_uL2_dom2"/>
</dbReference>
<dbReference type="InterPro" id="IPR020599">
    <property type="entry name" value="Transl_elong_fac_P/YeiP"/>
</dbReference>
<dbReference type="InterPro" id="IPR013185">
    <property type="entry name" value="Transl_elong_KOW-like"/>
</dbReference>
<dbReference type="InterPro" id="IPR001059">
    <property type="entry name" value="Transl_elong_P/YeiP_cen"/>
</dbReference>
<dbReference type="InterPro" id="IPR011768">
    <property type="entry name" value="Transl_elongation_fac_P"/>
</dbReference>
<dbReference type="InterPro" id="IPR008991">
    <property type="entry name" value="Translation_prot_SH3-like_sf"/>
</dbReference>
<dbReference type="NCBIfam" id="TIGR00038">
    <property type="entry name" value="efp"/>
    <property type="match status" value="1"/>
</dbReference>
<dbReference type="NCBIfam" id="NF001810">
    <property type="entry name" value="PRK00529.1"/>
    <property type="match status" value="1"/>
</dbReference>
<dbReference type="PANTHER" id="PTHR30053">
    <property type="entry name" value="ELONGATION FACTOR P"/>
    <property type="match status" value="1"/>
</dbReference>
<dbReference type="PANTHER" id="PTHR30053:SF14">
    <property type="entry name" value="TRANSLATION ELONGATION FACTOR KOW-LIKE DOMAIN-CONTAINING PROTEIN"/>
    <property type="match status" value="1"/>
</dbReference>
<dbReference type="Pfam" id="PF01132">
    <property type="entry name" value="EFP"/>
    <property type="match status" value="1"/>
</dbReference>
<dbReference type="Pfam" id="PF08207">
    <property type="entry name" value="EFP_N"/>
    <property type="match status" value="1"/>
</dbReference>
<dbReference type="Pfam" id="PF09285">
    <property type="entry name" value="Elong-fact-P_C"/>
    <property type="match status" value="1"/>
</dbReference>
<dbReference type="PIRSF" id="PIRSF005901">
    <property type="entry name" value="EF-P"/>
    <property type="match status" value="1"/>
</dbReference>
<dbReference type="SMART" id="SM01185">
    <property type="entry name" value="EFP"/>
    <property type="match status" value="1"/>
</dbReference>
<dbReference type="SMART" id="SM00841">
    <property type="entry name" value="Elong-fact-P_C"/>
    <property type="match status" value="1"/>
</dbReference>
<dbReference type="SUPFAM" id="SSF50249">
    <property type="entry name" value="Nucleic acid-binding proteins"/>
    <property type="match status" value="2"/>
</dbReference>
<dbReference type="SUPFAM" id="SSF50104">
    <property type="entry name" value="Translation proteins SH3-like domain"/>
    <property type="match status" value="1"/>
</dbReference>
<comment type="function">
    <text evidence="1">Involved in peptide bond synthesis. Stimulates efficient translation and peptide-bond synthesis on native or reconstituted 70S ribosomes in vitro. Probably functions indirectly by altering the affinity of the ribosome for aminoacyl-tRNA, thus increasing their reactivity as acceptors for peptidyl transferase.</text>
</comment>
<comment type="pathway">
    <text evidence="1">Protein biosynthesis; polypeptide chain elongation.</text>
</comment>
<comment type="subcellular location">
    <subcellularLocation>
        <location evidence="1">Cytoplasm</location>
    </subcellularLocation>
</comment>
<comment type="similarity">
    <text evidence="1">Belongs to the elongation factor P family.</text>
</comment>
<name>EFP_EHRCR</name>
<feature type="chain" id="PRO_1000010738" description="Elongation factor P">
    <location>
        <begin position="1"/>
        <end position="189"/>
    </location>
</feature>
<reference key="1">
    <citation type="journal article" date="2006" name="PLoS Genet.">
        <title>Comparative genomics of emerging human ehrlichiosis agents.</title>
        <authorList>
            <person name="Dunning Hotopp J.C."/>
            <person name="Lin M."/>
            <person name="Madupu R."/>
            <person name="Crabtree J."/>
            <person name="Angiuoli S.V."/>
            <person name="Eisen J.A."/>
            <person name="Seshadri R."/>
            <person name="Ren Q."/>
            <person name="Wu M."/>
            <person name="Utterback T.R."/>
            <person name="Smith S."/>
            <person name="Lewis M."/>
            <person name="Khouri H."/>
            <person name="Zhang C."/>
            <person name="Niu H."/>
            <person name="Lin Q."/>
            <person name="Ohashi N."/>
            <person name="Zhi N."/>
            <person name="Nelson W.C."/>
            <person name="Brinkac L.M."/>
            <person name="Dodson R.J."/>
            <person name="Rosovitz M.J."/>
            <person name="Sundaram J.P."/>
            <person name="Daugherty S.C."/>
            <person name="Davidsen T."/>
            <person name="Durkin A.S."/>
            <person name="Gwinn M.L."/>
            <person name="Haft D.H."/>
            <person name="Selengut J.D."/>
            <person name="Sullivan S.A."/>
            <person name="Zafar N."/>
            <person name="Zhou L."/>
            <person name="Benahmed F."/>
            <person name="Forberger H."/>
            <person name="Halpin R."/>
            <person name="Mulligan S."/>
            <person name="Robinson J."/>
            <person name="White O."/>
            <person name="Rikihisa Y."/>
            <person name="Tettelin H."/>
        </authorList>
    </citation>
    <scope>NUCLEOTIDE SEQUENCE [LARGE SCALE GENOMIC DNA]</scope>
    <source>
        <strain>ATCC CRL-10679 / Arkansas</strain>
    </source>
</reference>
<proteinExistence type="inferred from homology"/>